<comment type="function">
    <text evidence="2">Lipid transporter involved in lipid countertransport between the endoplasmic reticulum and the plasma membrane: specifically exchanges phosphatidylserine with phosphatidylinositol 4-phosphate (PI4P), delivering phosphatidylserine to the plasma membrane in exchange for PI4P, which is degraded by the SAC1/SACM1L phosphatase in the endoplasmic reticulum. Binds phosphatidylserine and PI4P in a mutually exclusive manner. May cooperate with NPC1 to mediate the exit of cholesterol from endosomes/lysosomes. Binds 25-hydroxycholesterol and cholesterol.</text>
</comment>
<comment type="subcellular location">
    <subcellularLocation>
        <location evidence="2">Endoplasmic reticulum membrane</location>
        <topology evidence="2">Single-pass membrane protein</topology>
    </subcellularLocation>
    <text evidence="2">Localizes to endoplasmic reticulum-plasma membrane contact sites (EPCS). Localizes to the cortical endoplasmic reticulum at the EPCS.</text>
</comment>
<comment type="miscellaneous">
    <text evidence="6">Imprinted gene expressed from the maternal allele in blastocysts.</text>
</comment>
<comment type="similarity">
    <text evidence="8">Belongs to the OSBP family.</text>
</comment>
<comment type="sequence caution" evidence="8">
    <conflict type="erroneous initiation">
        <sequence resource="EMBL-CDS" id="CAC16404"/>
    </conflict>
</comment>
<comment type="sequence caution" evidence="8">
    <conflict type="erroneous initiation">
        <sequence resource="EMBL-CDS" id="CAC27351"/>
    </conflict>
</comment>
<keyword id="KW-0175">Coiled coil</keyword>
<keyword id="KW-0256">Endoplasmic reticulum</keyword>
<keyword id="KW-0445">Lipid transport</keyword>
<keyword id="KW-0446">Lipid-binding</keyword>
<keyword id="KW-0472">Membrane</keyword>
<keyword id="KW-0597">Phosphoprotein</keyword>
<keyword id="KW-1185">Reference proteome</keyword>
<keyword id="KW-0812">Transmembrane</keyword>
<keyword id="KW-1133">Transmembrane helix</keyword>
<keyword id="KW-0813">Transport</keyword>
<protein>
    <recommendedName>
        <fullName>Oxysterol-binding protein-related protein 5</fullName>
        <shortName>ORP-5</shortName>
        <shortName>OSBP-related protein 5</shortName>
    </recommendedName>
    <alternativeName>
        <fullName evidence="7">Oxysterol-binding protein homolog 1</fullName>
    </alternativeName>
</protein>
<dbReference type="EMBL" id="AJ278263">
    <property type="protein sequence ID" value="CAC16404.2"/>
    <property type="status" value="ALT_INIT"/>
    <property type="molecule type" value="mRNA"/>
</dbReference>
<dbReference type="EMBL" id="AJ276505">
    <property type="protein sequence ID" value="CAC27351.1"/>
    <property type="status" value="ALT_INIT"/>
    <property type="molecule type" value="Genomic_DNA"/>
</dbReference>
<dbReference type="EMBL" id="AB074008">
    <property type="protein sequence ID" value="BAB85687.1"/>
    <property type="molecule type" value="mRNA"/>
</dbReference>
<dbReference type="EMBL" id="BC079872">
    <property type="protein sequence ID" value="AAH79872.1"/>
    <property type="molecule type" value="mRNA"/>
</dbReference>
<dbReference type="CCDS" id="CCDS57598.1"/>
<dbReference type="RefSeq" id="NP_001186156.1">
    <property type="nucleotide sequence ID" value="NM_001199227.1"/>
</dbReference>
<dbReference type="SMR" id="Q9ER64"/>
<dbReference type="BioGRID" id="219738">
    <property type="interactions" value="1"/>
</dbReference>
<dbReference type="FunCoup" id="Q9ER64">
    <property type="interactions" value="1143"/>
</dbReference>
<dbReference type="STRING" id="10090.ENSMUSP00000020411"/>
<dbReference type="GlyGen" id="Q9ER64">
    <property type="glycosylation" value="1 site"/>
</dbReference>
<dbReference type="iPTMnet" id="Q9ER64"/>
<dbReference type="PhosphoSitePlus" id="Q9ER64"/>
<dbReference type="PaxDb" id="10090-ENSMUSP00000020411"/>
<dbReference type="ProteomicsDB" id="293526"/>
<dbReference type="Pumba" id="Q9ER64"/>
<dbReference type="Antibodypedia" id="23281">
    <property type="antibodies" value="79 antibodies from 23 providers"/>
</dbReference>
<dbReference type="DNASU" id="79196"/>
<dbReference type="Ensembl" id="ENSMUST00000119499.8">
    <property type="protein sequence ID" value="ENSMUSP00000113362.2"/>
    <property type="gene ID" value="ENSMUSG00000037606.19"/>
</dbReference>
<dbReference type="GeneID" id="79196"/>
<dbReference type="KEGG" id="mmu:79196"/>
<dbReference type="UCSC" id="uc009kpw.2">
    <property type="organism name" value="mouse"/>
</dbReference>
<dbReference type="AGR" id="MGI:1930265"/>
<dbReference type="CTD" id="114879"/>
<dbReference type="MGI" id="MGI:1930265">
    <property type="gene designation" value="Osbpl5"/>
</dbReference>
<dbReference type="VEuPathDB" id="HostDB:ENSMUSG00000037606"/>
<dbReference type="eggNOG" id="KOG2210">
    <property type="taxonomic scope" value="Eukaryota"/>
</dbReference>
<dbReference type="GeneTree" id="ENSGT00940000159535"/>
<dbReference type="HOGENOM" id="CLU_012334_2_1_1"/>
<dbReference type="InParanoid" id="Q9ER64"/>
<dbReference type="OMA" id="ESDRCWM"/>
<dbReference type="OrthoDB" id="10053431at2759"/>
<dbReference type="PhylomeDB" id="Q9ER64"/>
<dbReference type="Reactome" id="R-MMU-1482801">
    <property type="pathway name" value="Acyl chain remodelling of PS"/>
</dbReference>
<dbReference type="BioGRID-ORCS" id="79196">
    <property type="hits" value="1 hit in 80 CRISPR screens"/>
</dbReference>
<dbReference type="ChiTaRS" id="Osbpl5">
    <property type="organism name" value="mouse"/>
</dbReference>
<dbReference type="PRO" id="PR:Q9ER64"/>
<dbReference type="Proteomes" id="UP000000589">
    <property type="component" value="Chromosome 7"/>
</dbReference>
<dbReference type="RNAct" id="Q9ER64">
    <property type="molecule type" value="protein"/>
</dbReference>
<dbReference type="Bgee" id="ENSMUSG00000037606">
    <property type="expression patterns" value="Expressed in ileal epithelium and 214 other cell types or tissues"/>
</dbReference>
<dbReference type="ExpressionAtlas" id="Q9ER64">
    <property type="expression patterns" value="baseline and differential"/>
</dbReference>
<dbReference type="GO" id="GO:0005789">
    <property type="term" value="C:endoplasmic reticulum membrane"/>
    <property type="evidence" value="ECO:0007669"/>
    <property type="project" value="UniProtKB-SubCell"/>
</dbReference>
<dbReference type="GO" id="GO:0140268">
    <property type="term" value="C:endoplasmic reticulum-plasma membrane contact site"/>
    <property type="evidence" value="ECO:0000250"/>
    <property type="project" value="UniProtKB"/>
</dbReference>
<dbReference type="GO" id="GO:0015485">
    <property type="term" value="F:cholesterol binding"/>
    <property type="evidence" value="ECO:0007669"/>
    <property type="project" value="Ensembl"/>
</dbReference>
<dbReference type="GO" id="GO:0070273">
    <property type="term" value="F:phosphatidylinositol-4-phosphate binding"/>
    <property type="evidence" value="ECO:0000250"/>
    <property type="project" value="UniProtKB"/>
</dbReference>
<dbReference type="GO" id="GO:0001786">
    <property type="term" value="F:phosphatidylserine binding"/>
    <property type="evidence" value="ECO:0000250"/>
    <property type="project" value="UniProtKB"/>
</dbReference>
<dbReference type="GO" id="GO:0140343">
    <property type="term" value="F:phosphatidylserine transfer activity"/>
    <property type="evidence" value="ECO:0000250"/>
    <property type="project" value="UniProtKB"/>
</dbReference>
<dbReference type="GO" id="GO:0015914">
    <property type="term" value="P:phospholipid transport"/>
    <property type="evidence" value="ECO:0000250"/>
    <property type="project" value="UniProtKB"/>
</dbReference>
<dbReference type="CDD" id="cd13286">
    <property type="entry name" value="PH_OPR5_ORP8"/>
    <property type="match status" value="1"/>
</dbReference>
<dbReference type="FunFam" id="1.10.287.2720:FF:000002">
    <property type="entry name" value="Oxysterol-binding protein"/>
    <property type="match status" value="1"/>
</dbReference>
<dbReference type="FunFam" id="2.30.29.30:FF:000030">
    <property type="entry name" value="Oxysterol-binding protein"/>
    <property type="match status" value="1"/>
</dbReference>
<dbReference type="FunFam" id="2.40.160.120:FF:000020">
    <property type="entry name" value="Oxysterol-binding protein"/>
    <property type="match status" value="1"/>
</dbReference>
<dbReference type="FunFam" id="3.30.70.3490:FF:000011">
    <property type="entry name" value="Oxysterol-binding protein"/>
    <property type="match status" value="1"/>
</dbReference>
<dbReference type="Gene3D" id="1.10.287.2720">
    <property type="match status" value="1"/>
</dbReference>
<dbReference type="Gene3D" id="2.40.160.120">
    <property type="match status" value="1"/>
</dbReference>
<dbReference type="Gene3D" id="3.30.70.3490">
    <property type="match status" value="1"/>
</dbReference>
<dbReference type="Gene3D" id="2.30.29.30">
    <property type="entry name" value="Pleckstrin-homology domain (PH domain)/Phosphotyrosine-binding domain (PTB)"/>
    <property type="match status" value="1"/>
</dbReference>
<dbReference type="InterPro" id="IPR037239">
    <property type="entry name" value="OSBP_sf"/>
</dbReference>
<dbReference type="InterPro" id="IPR000648">
    <property type="entry name" value="Oxysterol-bd"/>
</dbReference>
<dbReference type="InterPro" id="IPR018494">
    <property type="entry name" value="Oxysterol-bd_CS"/>
</dbReference>
<dbReference type="InterPro" id="IPR011993">
    <property type="entry name" value="PH-like_dom_sf"/>
</dbReference>
<dbReference type="InterPro" id="IPR001849">
    <property type="entry name" value="PH_domain"/>
</dbReference>
<dbReference type="PANTHER" id="PTHR10972">
    <property type="entry name" value="OXYSTEROL-BINDING PROTEIN-RELATED"/>
    <property type="match status" value="1"/>
</dbReference>
<dbReference type="PANTHER" id="PTHR10972:SF213">
    <property type="entry name" value="OXYSTEROL-BINDING PROTEIN-RELATED PROTEIN 5"/>
    <property type="match status" value="1"/>
</dbReference>
<dbReference type="Pfam" id="PF01237">
    <property type="entry name" value="Oxysterol_BP"/>
    <property type="match status" value="1"/>
</dbReference>
<dbReference type="Pfam" id="PF00169">
    <property type="entry name" value="PH"/>
    <property type="match status" value="1"/>
</dbReference>
<dbReference type="SMART" id="SM00233">
    <property type="entry name" value="PH"/>
    <property type="match status" value="1"/>
</dbReference>
<dbReference type="SUPFAM" id="SSF144000">
    <property type="entry name" value="Oxysterol-binding protein-like"/>
    <property type="match status" value="1"/>
</dbReference>
<dbReference type="SUPFAM" id="SSF50729">
    <property type="entry name" value="PH domain-like"/>
    <property type="match status" value="1"/>
</dbReference>
<dbReference type="PROSITE" id="PS01013">
    <property type="entry name" value="OSBP"/>
    <property type="match status" value="1"/>
</dbReference>
<dbReference type="PROSITE" id="PS50003">
    <property type="entry name" value="PH_DOMAIN"/>
    <property type="match status" value="1"/>
</dbReference>
<evidence type="ECO:0000250" key="1">
    <source>
        <dbReference type="UniProtKB" id="Q02201"/>
    </source>
</evidence>
<evidence type="ECO:0000250" key="2">
    <source>
        <dbReference type="UniProtKB" id="Q9H0X9"/>
    </source>
</evidence>
<evidence type="ECO:0000255" key="3"/>
<evidence type="ECO:0000255" key="4">
    <source>
        <dbReference type="PROSITE-ProRule" id="PRU00145"/>
    </source>
</evidence>
<evidence type="ECO:0000256" key="5">
    <source>
        <dbReference type="SAM" id="MobiDB-lite"/>
    </source>
</evidence>
<evidence type="ECO:0000269" key="6">
    <source>
    </source>
</evidence>
<evidence type="ECO:0000303" key="7">
    <source ref="2"/>
</evidence>
<evidence type="ECO:0000305" key="8"/>
<evidence type="ECO:0007744" key="9">
    <source>
    </source>
</evidence>
<reference key="1">
    <citation type="journal article" date="2000" name="Hum. Mol. Genet.">
        <title>Sequence and functional comparison in the Beckwith-Wiedemann region: implications for a novel imprinting centre and extended imprinting.</title>
        <authorList>
            <person name="Engemann S."/>
            <person name="Stroedicke M."/>
            <person name="Paulsen M."/>
            <person name="Franck O."/>
            <person name="Reinhardt R."/>
            <person name="Lane N."/>
            <person name="Reik W."/>
            <person name="Walter J."/>
        </authorList>
    </citation>
    <scope>NUCLEOTIDE SEQUENCE [GENOMIC DNA / MRNA]</scope>
    <source>
        <strain>129/Sv</strain>
    </source>
</reference>
<reference key="2">
    <citation type="submission" date="2001-11" db="EMBL/GenBank/DDBJ databases">
        <title>Unique imprinted status of mouse Obph1 gene and no imprimted status of the human homologue in placenta.</title>
        <authorList>
            <person name="Higashimoto K."/>
            <person name="Soejima H."/>
            <person name="Yatsuki H."/>
            <person name="Joh K."/>
            <person name="Wang Y."/>
            <person name="Ishino F."/>
            <person name="Ono R."/>
            <person name="Jinno Y."/>
            <person name="Iwasaka T."/>
            <person name="Uchiyama M."/>
            <person name="Masuko S."/>
            <person name="Xin Z."/>
            <person name="Zhu X."/>
            <person name="Katsuki T."/>
            <person name="Mukai T."/>
        </authorList>
    </citation>
    <scope>NUCLEOTIDE SEQUENCE [MRNA]</scope>
</reference>
<reference key="3">
    <citation type="journal article" date="2004" name="Genome Res.">
        <title>The status, quality, and expansion of the NIH full-length cDNA project: the Mammalian Gene Collection (MGC).</title>
        <authorList>
            <consortium name="The MGC Project Team"/>
        </authorList>
    </citation>
    <scope>NUCLEOTIDE SEQUENCE [LARGE SCALE MRNA]</scope>
    <source>
        <strain>C57BL/6J</strain>
        <tissue>Brain</tissue>
    </source>
</reference>
<reference key="4">
    <citation type="journal article" date="2008" name="Gene Expr. Patterns">
        <title>The PcG gene Sfmbt2 is paternally expressed in extraembryonic tissues.</title>
        <authorList>
            <person name="Kuzmin A."/>
            <person name="Han Z."/>
            <person name="Golding M.C."/>
            <person name="Mann M.R."/>
            <person name="Latham K.E."/>
            <person name="Varmuza S."/>
        </authorList>
    </citation>
    <scope>IMPRINTING</scope>
</reference>
<reference key="5">
    <citation type="journal article" date="2010" name="Cell">
        <title>A tissue-specific atlas of mouse protein phosphorylation and expression.</title>
        <authorList>
            <person name="Huttlin E.L."/>
            <person name="Jedrychowski M.P."/>
            <person name="Elias J.E."/>
            <person name="Goswami T."/>
            <person name="Rad R."/>
            <person name="Beausoleil S.A."/>
            <person name="Villen J."/>
            <person name="Haas W."/>
            <person name="Sowa M.E."/>
            <person name="Gygi S.P."/>
        </authorList>
    </citation>
    <scope>PHOSPHORYLATION [LARGE SCALE ANALYSIS] AT SER-12; SER-746 AND SER-749</scope>
    <scope>IDENTIFICATION BY MASS SPECTROMETRY [LARGE SCALE ANALYSIS]</scope>
    <source>
        <tissue>Kidney</tissue>
        <tissue>Lung</tissue>
    </source>
</reference>
<feature type="chain" id="PRO_0000100374" description="Oxysterol-binding protein-related protein 5">
    <location>
        <begin position="1"/>
        <end position="874"/>
    </location>
</feature>
<feature type="transmembrane region" description="Helical" evidence="3">
    <location>
        <begin position="855"/>
        <end position="873"/>
    </location>
</feature>
<feature type="domain" description="PH" evidence="4">
    <location>
        <begin position="126"/>
        <end position="243"/>
    </location>
</feature>
<feature type="region of interest" description="Disordered" evidence="5">
    <location>
        <begin position="1"/>
        <end position="71"/>
    </location>
</feature>
<feature type="region of interest" description="Disordered" evidence="5">
    <location>
        <begin position="255"/>
        <end position="277"/>
    </location>
</feature>
<feature type="region of interest" description="Disordered" evidence="5">
    <location>
        <begin position="299"/>
        <end position="338"/>
    </location>
</feature>
<feature type="region of interest" description="Disordered" evidence="5">
    <location>
        <begin position="660"/>
        <end position="685"/>
    </location>
</feature>
<feature type="region of interest" description="Disordered" evidence="5">
    <location>
        <begin position="739"/>
        <end position="798"/>
    </location>
</feature>
<feature type="coiled-coil region" evidence="3">
    <location>
        <begin position="93"/>
        <end position="123"/>
    </location>
</feature>
<feature type="compositionally biased region" description="Polar residues" evidence="5">
    <location>
        <begin position="261"/>
        <end position="277"/>
    </location>
</feature>
<feature type="compositionally biased region" description="Basic and acidic residues" evidence="5">
    <location>
        <begin position="299"/>
        <end position="308"/>
    </location>
</feature>
<feature type="compositionally biased region" description="Basic and acidic residues" evidence="5">
    <location>
        <begin position="660"/>
        <end position="684"/>
    </location>
</feature>
<feature type="compositionally biased region" description="Basic and acidic residues" evidence="5">
    <location>
        <begin position="754"/>
        <end position="764"/>
    </location>
</feature>
<feature type="compositionally biased region" description="Polar residues" evidence="5">
    <location>
        <begin position="765"/>
        <end position="782"/>
    </location>
</feature>
<feature type="binding site" evidence="1">
    <location>
        <begin position="383"/>
        <end position="388"/>
    </location>
    <ligand>
        <name>a 1,2-diacyl-sn-glycero-3-phospho-(1D-myo-inositol 4-phosphate)</name>
        <dbReference type="ChEBI" id="CHEBI:58178"/>
    </ligand>
</feature>
<feature type="binding site" evidence="1">
    <location>
        <begin position="383"/>
        <end position="388"/>
    </location>
    <ligand>
        <name>a 1,2-diacyl-sn-glycero-3-phospho-L-serine</name>
        <dbReference type="ChEBI" id="CHEBI:57262"/>
    </ligand>
</feature>
<feature type="binding site" evidence="1">
    <location>
        <begin position="445"/>
        <end position="448"/>
    </location>
    <ligand>
        <name>a 1,2-diacyl-sn-glycero-3-phospho-(1D-myo-inositol 4-phosphate)</name>
        <dbReference type="ChEBI" id="CHEBI:58178"/>
    </ligand>
</feature>
<feature type="binding site" evidence="1">
    <location>
        <position position="448"/>
    </location>
    <ligand>
        <name>a 1,2-diacyl-sn-glycero-3-phospho-L-serine</name>
        <dbReference type="ChEBI" id="CHEBI:57262"/>
    </ligand>
</feature>
<feature type="binding site" evidence="1">
    <location>
        <begin position="477"/>
        <end position="478"/>
    </location>
    <ligand>
        <name>a 1,2-diacyl-sn-glycero-3-phospho-(1D-myo-inositol 4-phosphate)</name>
        <dbReference type="ChEBI" id="CHEBI:58178"/>
    </ligand>
</feature>
<feature type="binding site" evidence="1">
    <location>
        <position position="503"/>
    </location>
    <ligand>
        <name>a 1,2-diacyl-sn-glycero-3-phospho-L-serine</name>
        <dbReference type="ChEBI" id="CHEBI:57262"/>
    </ligand>
</feature>
<feature type="binding site" evidence="1">
    <location>
        <position position="669"/>
    </location>
    <ligand>
        <name>a 1,2-diacyl-sn-glycero-3-phospho-(1D-myo-inositol 4-phosphate)</name>
        <dbReference type="ChEBI" id="CHEBI:58178"/>
    </ligand>
</feature>
<feature type="binding site" evidence="1">
    <location>
        <position position="673"/>
    </location>
    <ligand>
        <name>a 1,2-diacyl-sn-glycero-3-phospho-(1D-myo-inositol 4-phosphate)</name>
        <dbReference type="ChEBI" id="CHEBI:58178"/>
    </ligand>
</feature>
<feature type="binding site" evidence="1">
    <location>
        <position position="677"/>
    </location>
    <ligand>
        <name>a 1,2-diacyl-sn-glycero-3-phospho-(1D-myo-inositol 4-phosphate)</name>
        <dbReference type="ChEBI" id="CHEBI:58178"/>
    </ligand>
</feature>
<feature type="modified residue" description="Phosphoserine" evidence="9">
    <location>
        <position position="12"/>
    </location>
</feature>
<feature type="modified residue" description="Phosphoserine" evidence="9">
    <location>
        <position position="746"/>
    </location>
</feature>
<feature type="modified residue" description="Phosphoserine" evidence="9">
    <location>
        <position position="749"/>
    </location>
</feature>
<feature type="sequence conflict" description="In Ref. 1; CAC27351." evidence="8" ref="1">
    <original>ENELGPIT</original>
    <variation>MSLVPSPQ</variation>
    <location>
        <begin position="37"/>
        <end position="44"/>
    </location>
</feature>
<feature type="sequence conflict" description="In Ref. 2; BAB85687." evidence="8" ref="2">
    <original>D</original>
    <variation>N</variation>
    <location>
        <position position="312"/>
    </location>
</feature>
<gene>
    <name type="primary">Osbpl5</name>
    <name evidence="7" type="synonym">Obph1</name>
    <name type="synonym">Osbp2</name>
</gene>
<organism>
    <name type="scientific">Mus musculus</name>
    <name type="common">Mouse</name>
    <dbReference type="NCBI Taxonomy" id="10090"/>
    <lineage>
        <taxon>Eukaryota</taxon>
        <taxon>Metazoa</taxon>
        <taxon>Chordata</taxon>
        <taxon>Craniata</taxon>
        <taxon>Vertebrata</taxon>
        <taxon>Euteleostomi</taxon>
        <taxon>Mammalia</taxon>
        <taxon>Eutheria</taxon>
        <taxon>Euarchontoglires</taxon>
        <taxon>Glires</taxon>
        <taxon>Rodentia</taxon>
        <taxon>Myomorpha</taxon>
        <taxon>Muroidea</taxon>
        <taxon>Muridae</taxon>
        <taxon>Murinae</taxon>
        <taxon>Mus</taxon>
        <taxon>Mus</taxon>
    </lineage>
</organism>
<accession>Q9ER64</accession>
<accession>Q8R510</accession>
<accession>Q99NF5</accession>
<sequence length="874" mass="98922">MKEEAFLRRRFSLCPPASTPQKTDPRKVPRNLLLGCENELGPITPGRDMESNGPSQPRDEEPQTPGSATKVPLAEYRLCNGSDKECTSPTTRVSKKDALKAQKENYRQEKKRATKQLFSALTDPSVVIMADSLKIRGTLKSWTKLWCVLKPGVLLIYKTPKVGQWVGTVLLHCCELIERPSKKDGFCFKLFHPLDQSVWAVKGPKGESVGSITQPLPSSYLIFRAASESDGRCWLDALELALRCSSLLRLSTCKQGRDGEQGSSPDASPSSLYGLPTSATIPDQDLFPLNGSALENDAFSDKSERENAEDSDAETQDHSRKTNESGSDLLDSPGGPWRGTTYVEQVQEELGELDETSQVETVSEENKSLMWVLLRQLRPGMDLSRVVLPTFVLEPRSFLGKLSDYYYHGDLLSRAAAEDDPYCRMKLVLRWYLSGFYKKPKGIKKPYNPILGETFRCRWLHPQTNSHTFYIAEQVSHHPPVSAFYVSNRKDGFCMSGSITAKSKFYGNSLSALLDGKAKLTFLNRKEEYTLTMPYAHCRGILYGTMTMELGGKVNIECEKNNLQAELDFKLKPFFGSSANINQISGKIMSGEEVLARLTGHWDRDVFIKEESSGGTELFWTPSEEVRRQRLKRHTVLLEEQSELESERLWQHVTRAIREGDQHKATQEKSVLEEAQRQRAREHQQSLTPWKPQLFLLDPLTQEWRYRYEDLSPWDPLKDIAQYEQDGILHTLQRETMSGQTTFLGSPDSRHKRPSSDRRLRKASDQPSGHSQVTESSGSTPESCPDLSDEDFVPGGESPCPRCRREVHRLKMLQEAVLSIQEAQQELHRHLSTMLSSTVRAGQAPAPSLLQNPRSWFLLCIFLTCQLFINYILK</sequence>
<proteinExistence type="evidence at protein level"/>
<name>OSBL5_MOUSE</name>